<organism>
    <name type="scientific">Methanoculleus marisnigri (strain ATCC 35101 / DSM 1498 / JR1)</name>
    <dbReference type="NCBI Taxonomy" id="368407"/>
    <lineage>
        <taxon>Archaea</taxon>
        <taxon>Methanobacteriati</taxon>
        <taxon>Methanobacteriota</taxon>
        <taxon>Stenosarchaea group</taxon>
        <taxon>Methanomicrobia</taxon>
        <taxon>Methanomicrobiales</taxon>
        <taxon>Methanomicrobiaceae</taxon>
        <taxon>Methanoculleus</taxon>
    </lineage>
</organism>
<accession>A3CRJ3</accession>
<sequence>MTVKLGFVVAEFNRDITYMMEIEAREHAGFLDAEVADTIYVPGAYDMPLAIKKLLERGEIDAVVTIGCVIEGATQHDEIVVQHAARKIIDLSLEFGKPVALGISGPGMTRMEATERIDYAKRAVESAVKMVQRLE</sequence>
<protein>
    <recommendedName>
        <fullName evidence="1">6,7-dimethyl-8-ribityllumazine synthase</fullName>
        <shortName evidence="1">DMRL synthase</shortName>
        <shortName evidence="1">LS</shortName>
        <shortName evidence="1">Lumazine synthase</shortName>
        <ecNumber evidence="1">2.5.1.78</ecNumber>
    </recommendedName>
</protein>
<keyword id="KW-0686">Riboflavin biosynthesis</keyword>
<keyword id="KW-0808">Transferase</keyword>
<name>RISB_METMJ</name>
<comment type="function">
    <text evidence="1">Catalyzes the formation of 6,7-dimethyl-8-ribityllumazine by condensation of 5-amino-6-(D-ribitylamino)uracil with 3,4-dihydroxy-2-butanone 4-phosphate. This is the penultimate step in the biosynthesis of riboflavin.</text>
</comment>
<comment type="catalytic activity">
    <reaction evidence="1">
        <text>(2S)-2-hydroxy-3-oxobutyl phosphate + 5-amino-6-(D-ribitylamino)uracil = 6,7-dimethyl-8-(1-D-ribityl)lumazine + phosphate + 2 H2O + H(+)</text>
        <dbReference type="Rhea" id="RHEA:26152"/>
        <dbReference type="ChEBI" id="CHEBI:15377"/>
        <dbReference type="ChEBI" id="CHEBI:15378"/>
        <dbReference type="ChEBI" id="CHEBI:15934"/>
        <dbReference type="ChEBI" id="CHEBI:43474"/>
        <dbReference type="ChEBI" id="CHEBI:58201"/>
        <dbReference type="ChEBI" id="CHEBI:58830"/>
        <dbReference type="EC" id="2.5.1.78"/>
    </reaction>
</comment>
<comment type="pathway">
    <text evidence="1">Cofactor biosynthesis; riboflavin biosynthesis; riboflavin from 2-hydroxy-3-oxobutyl phosphate and 5-amino-6-(D-ribitylamino)uracil: step 1/2.</text>
</comment>
<comment type="similarity">
    <text evidence="1">Belongs to the DMRL synthase family.</text>
</comment>
<evidence type="ECO:0000255" key="1">
    <source>
        <dbReference type="HAMAP-Rule" id="MF_00178"/>
    </source>
</evidence>
<dbReference type="EC" id="2.5.1.78" evidence="1"/>
<dbReference type="EMBL" id="CP000562">
    <property type="protein sequence ID" value="ABN55993.1"/>
    <property type="molecule type" value="Genomic_DNA"/>
</dbReference>
<dbReference type="RefSeq" id="WP_011842914.1">
    <property type="nucleotide sequence ID" value="NC_009051.1"/>
</dbReference>
<dbReference type="SMR" id="A3CRJ3"/>
<dbReference type="STRING" id="368407.Memar_0058"/>
<dbReference type="GeneID" id="4846286"/>
<dbReference type="GeneID" id="76730642"/>
<dbReference type="KEGG" id="mem:Memar_0058"/>
<dbReference type="eggNOG" id="arCOG01323">
    <property type="taxonomic scope" value="Archaea"/>
</dbReference>
<dbReference type="HOGENOM" id="CLU_089358_3_1_2"/>
<dbReference type="OrthoDB" id="7610at2157"/>
<dbReference type="UniPathway" id="UPA00275">
    <property type="reaction ID" value="UER00404"/>
</dbReference>
<dbReference type="Proteomes" id="UP000002146">
    <property type="component" value="Chromosome"/>
</dbReference>
<dbReference type="GO" id="GO:0009349">
    <property type="term" value="C:riboflavin synthase complex"/>
    <property type="evidence" value="ECO:0007669"/>
    <property type="project" value="InterPro"/>
</dbReference>
<dbReference type="GO" id="GO:0000906">
    <property type="term" value="F:6,7-dimethyl-8-ribityllumazine synthase activity"/>
    <property type="evidence" value="ECO:0007669"/>
    <property type="project" value="UniProtKB-UniRule"/>
</dbReference>
<dbReference type="GO" id="GO:0009231">
    <property type="term" value="P:riboflavin biosynthetic process"/>
    <property type="evidence" value="ECO:0007669"/>
    <property type="project" value="UniProtKB-UniRule"/>
</dbReference>
<dbReference type="CDD" id="cd09211">
    <property type="entry name" value="Lumazine_synthase_archaeal"/>
    <property type="match status" value="1"/>
</dbReference>
<dbReference type="FunFam" id="3.40.50.960:FF:000003">
    <property type="entry name" value="6,7-dimethyl-8-ribityllumazine synthase"/>
    <property type="match status" value="1"/>
</dbReference>
<dbReference type="Gene3D" id="3.40.50.960">
    <property type="entry name" value="Lumazine/riboflavin synthase"/>
    <property type="match status" value="1"/>
</dbReference>
<dbReference type="HAMAP" id="MF_00178">
    <property type="entry name" value="Lumazine_synth"/>
    <property type="match status" value="1"/>
</dbReference>
<dbReference type="InterPro" id="IPR034964">
    <property type="entry name" value="LS"/>
</dbReference>
<dbReference type="InterPro" id="IPR002180">
    <property type="entry name" value="LS/RS"/>
</dbReference>
<dbReference type="InterPro" id="IPR036467">
    <property type="entry name" value="LS/RS_sf"/>
</dbReference>
<dbReference type="NCBIfam" id="TIGR00114">
    <property type="entry name" value="lumazine-synth"/>
    <property type="match status" value="1"/>
</dbReference>
<dbReference type="PANTHER" id="PTHR21058:SF0">
    <property type="entry name" value="6,7-DIMETHYL-8-RIBITYLLUMAZINE SYNTHASE"/>
    <property type="match status" value="1"/>
</dbReference>
<dbReference type="PANTHER" id="PTHR21058">
    <property type="entry name" value="6,7-DIMETHYL-8-RIBITYLLUMAZINE SYNTHASE DMRL SYNTHASE LUMAZINE SYNTHASE"/>
    <property type="match status" value="1"/>
</dbReference>
<dbReference type="Pfam" id="PF00885">
    <property type="entry name" value="DMRL_synthase"/>
    <property type="match status" value="1"/>
</dbReference>
<dbReference type="SUPFAM" id="SSF52121">
    <property type="entry name" value="Lumazine synthase"/>
    <property type="match status" value="1"/>
</dbReference>
<reference key="1">
    <citation type="journal article" date="2009" name="Stand. Genomic Sci.">
        <title>Complete genome sequence of Methanoculleus marisnigri Romesser et al. 1981 type strain JR1.</title>
        <authorList>
            <person name="Anderson I.J."/>
            <person name="Sieprawska-Lupa M."/>
            <person name="Lapidus A."/>
            <person name="Nolan M."/>
            <person name="Copeland A."/>
            <person name="Glavina Del Rio T."/>
            <person name="Tice H."/>
            <person name="Dalin E."/>
            <person name="Barry K."/>
            <person name="Saunders E."/>
            <person name="Han C."/>
            <person name="Brettin T."/>
            <person name="Detter J.C."/>
            <person name="Bruce D."/>
            <person name="Mikhailova N."/>
            <person name="Pitluck S."/>
            <person name="Hauser L."/>
            <person name="Land M."/>
            <person name="Lucas S."/>
            <person name="Richardson P."/>
            <person name="Whitman W.B."/>
            <person name="Kyrpides N.C."/>
        </authorList>
    </citation>
    <scope>NUCLEOTIDE SEQUENCE [LARGE SCALE GENOMIC DNA]</scope>
    <source>
        <strain>ATCC 35101 / DSM 1498 / JR1</strain>
    </source>
</reference>
<feature type="chain" id="PRO_1000040450" description="6,7-dimethyl-8-ribityllumazine synthase">
    <location>
        <begin position="1"/>
        <end position="135"/>
    </location>
</feature>
<feature type="active site" description="Proton donor" evidence="1">
    <location>
        <position position="76"/>
    </location>
</feature>
<feature type="binding site" evidence="1">
    <location>
        <position position="12"/>
    </location>
    <ligand>
        <name>5-amino-6-(D-ribitylamino)uracil</name>
        <dbReference type="ChEBI" id="CHEBI:15934"/>
    </ligand>
</feature>
<feature type="binding site" evidence="1">
    <location>
        <begin position="44"/>
        <end position="46"/>
    </location>
    <ligand>
        <name>5-amino-6-(D-ribitylamino)uracil</name>
        <dbReference type="ChEBI" id="CHEBI:15934"/>
    </ligand>
</feature>
<feature type="binding site" evidence="1">
    <location>
        <begin position="68"/>
        <end position="70"/>
    </location>
    <ligand>
        <name>5-amino-6-(D-ribitylamino)uracil</name>
        <dbReference type="ChEBI" id="CHEBI:15934"/>
    </ligand>
</feature>
<feature type="binding site" evidence="1">
    <location>
        <begin position="73"/>
        <end position="74"/>
    </location>
    <ligand>
        <name>(2S)-2-hydroxy-3-oxobutyl phosphate</name>
        <dbReference type="ChEBI" id="CHEBI:58830"/>
    </ligand>
</feature>
<feature type="binding site" evidence="1">
    <location>
        <position position="101"/>
    </location>
    <ligand>
        <name>5-amino-6-(D-ribitylamino)uracil</name>
        <dbReference type="ChEBI" id="CHEBI:15934"/>
    </ligand>
</feature>
<feature type="binding site" evidence="1">
    <location>
        <position position="116"/>
    </location>
    <ligand>
        <name>(2S)-2-hydroxy-3-oxobutyl phosphate</name>
        <dbReference type="ChEBI" id="CHEBI:58830"/>
    </ligand>
</feature>
<proteinExistence type="inferred from homology"/>
<gene>
    <name evidence="1" type="primary">ribH</name>
    <name type="ordered locus">Memar_0058</name>
</gene>